<feature type="chain" id="PRO_1000116352" description="UPF0758 protein BCAH187_A4587">
    <location>
        <begin position="1"/>
        <end position="225"/>
    </location>
</feature>
<feature type="domain" description="MPN" evidence="1">
    <location>
        <begin position="103"/>
        <end position="225"/>
    </location>
</feature>
<feature type="short sequence motif" description="JAMM motif" evidence="1">
    <location>
        <begin position="174"/>
        <end position="187"/>
    </location>
</feature>
<feature type="binding site" evidence="1">
    <location>
        <position position="174"/>
    </location>
    <ligand>
        <name>Zn(2+)</name>
        <dbReference type="ChEBI" id="CHEBI:29105"/>
        <note>catalytic</note>
    </ligand>
</feature>
<feature type="binding site" evidence="1">
    <location>
        <position position="176"/>
    </location>
    <ligand>
        <name>Zn(2+)</name>
        <dbReference type="ChEBI" id="CHEBI:29105"/>
        <note>catalytic</note>
    </ligand>
</feature>
<feature type="binding site" evidence="1">
    <location>
        <position position="187"/>
    </location>
    <ligand>
        <name>Zn(2+)</name>
        <dbReference type="ChEBI" id="CHEBI:29105"/>
        <note>catalytic</note>
    </ligand>
</feature>
<dbReference type="EMBL" id="CP001177">
    <property type="protein sequence ID" value="ACJ79740.1"/>
    <property type="molecule type" value="Genomic_DNA"/>
</dbReference>
<dbReference type="SMR" id="B7HQL1"/>
<dbReference type="KEGG" id="bcr:BCAH187_A4587"/>
<dbReference type="HOGENOM" id="CLU_073529_0_2_9"/>
<dbReference type="Proteomes" id="UP000002214">
    <property type="component" value="Chromosome"/>
</dbReference>
<dbReference type="GO" id="GO:0046872">
    <property type="term" value="F:metal ion binding"/>
    <property type="evidence" value="ECO:0007669"/>
    <property type="project" value="UniProtKB-KW"/>
</dbReference>
<dbReference type="GO" id="GO:0008237">
    <property type="term" value="F:metallopeptidase activity"/>
    <property type="evidence" value="ECO:0007669"/>
    <property type="project" value="UniProtKB-KW"/>
</dbReference>
<dbReference type="GO" id="GO:0006508">
    <property type="term" value="P:proteolysis"/>
    <property type="evidence" value="ECO:0007669"/>
    <property type="project" value="UniProtKB-KW"/>
</dbReference>
<dbReference type="CDD" id="cd08071">
    <property type="entry name" value="MPN_DUF2466"/>
    <property type="match status" value="1"/>
</dbReference>
<dbReference type="Gene3D" id="3.40.140.10">
    <property type="entry name" value="Cytidine Deaminase, domain 2"/>
    <property type="match status" value="1"/>
</dbReference>
<dbReference type="InterPro" id="IPR037518">
    <property type="entry name" value="MPN"/>
</dbReference>
<dbReference type="InterPro" id="IPR025657">
    <property type="entry name" value="RadC_JAB"/>
</dbReference>
<dbReference type="InterPro" id="IPR010994">
    <property type="entry name" value="RuvA_2-like"/>
</dbReference>
<dbReference type="InterPro" id="IPR001405">
    <property type="entry name" value="UPF0758"/>
</dbReference>
<dbReference type="InterPro" id="IPR020891">
    <property type="entry name" value="UPF0758_CS"/>
</dbReference>
<dbReference type="InterPro" id="IPR046778">
    <property type="entry name" value="UPF0758_N"/>
</dbReference>
<dbReference type="NCBIfam" id="NF000642">
    <property type="entry name" value="PRK00024.1"/>
    <property type="match status" value="1"/>
</dbReference>
<dbReference type="NCBIfam" id="TIGR00608">
    <property type="entry name" value="radc"/>
    <property type="match status" value="1"/>
</dbReference>
<dbReference type="PANTHER" id="PTHR30471">
    <property type="entry name" value="DNA REPAIR PROTEIN RADC"/>
    <property type="match status" value="1"/>
</dbReference>
<dbReference type="PANTHER" id="PTHR30471:SF3">
    <property type="entry name" value="UPF0758 PROTEIN YEES-RELATED"/>
    <property type="match status" value="1"/>
</dbReference>
<dbReference type="Pfam" id="PF04002">
    <property type="entry name" value="RadC"/>
    <property type="match status" value="1"/>
</dbReference>
<dbReference type="Pfam" id="PF20582">
    <property type="entry name" value="UPF0758_N"/>
    <property type="match status" value="1"/>
</dbReference>
<dbReference type="SUPFAM" id="SSF47781">
    <property type="entry name" value="RuvA domain 2-like"/>
    <property type="match status" value="1"/>
</dbReference>
<dbReference type="PROSITE" id="PS50249">
    <property type="entry name" value="MPN"/>
    <property type="match status" value="1"/>
</dbReference>
<dbReference type="PROSITE" id="PS01302">
    <property type="entry name" value="UPF0758"/>
    <property type="match status" value="1"/>
</dbReference>
<keyword id="KW-0378">Hydrolase</keyword>
<keyword id="KW-0479">Metal-binding</keyword>
<keyword id="KW-0482">Metalloprotease</keyword>
<keyword id="KW-0645">Protease</keyword>
<keyword id="KW-0862">Zinc</keyword>
<comment type="similarity">
    <text evidence="2">Belongs to the UPF0758 family.</text>
</comment>
<sequence>MNGIRDVVKEEQPRERLLLEGAGSLSNRELLAVLLRTGSKDETVLKLSDKILHHFDGLRMLKDATLEELVSIHGVGVAKASQLIAAFELGRRMVRLEYQNRYSIRSPEDCARYMMEEMRFLQQEHFVCLYLNTKNQVIHRQTIFIGSLNSSIVHPREVFKEAFRRAAASIICLHNHPSGDPAPSREDIEVTKRLVECGRIIGIEVLDHIIIGDHKFVSLKEKGHI</sequence>
<organism>
    <name type="scientific">Bacillus cereus (strain AH187)</name>
    <dbReference type="NCBI Taxonomy" id="405534"/>
    <lineage>
        <taxon>Bacteria</taxon>
        <taxon>Bacillati</taxon>
        <taxon>Bacillota</taxon>
        <taxon>Bacilli</taxon>
        <taxon>Bacillales</taxon>
        <taxon>Bacillaceae</taxon>
        <taxon>Bacillus</taxon>
        <taxon>Bacillus cereus group</taxon>
    </lineage>
</organism>
<proteinExistence type="inferred from homology"/>
<protein>
    <recommendedName>
        <fullName>UPF0758 protein BCAH187_A4587</fullName>
    </recommendedName>
</protein>
<gene>
    <name type="ordered locus">BCAH187_A4587</name>
</gene>
<name>Y4587_BACC7</name>
<accession>B7HQL1</accession>
<reference key="1">
    <citation type="submission" date="2008-10" db="EMBL/GenBank/DDBJ databases">
        <title>Genome sequence of Bacillus cereus AH187.</title>
        <authorList>
            <person name="Dodson R.J."/>
            <person name="Durkin A.S."/>
            <person name="Rosovitz M.J."/>
            <person name="Rasko D.A."/>
            <person name="Kolsto A.B."/>
            <person name="Okstad O.A."/>
            <person name="Ravel J."/>
            <person name="Sutton G."/>
        </authorList>
    </citation>
    <scope>NUCLEOTIDE SEQUENCE [LARGE SCALE GENOMIC DNA]</scope>
    <source>
        <strain>AH187</strain>
    </source>
</reference>
<evidence type="ECO:0000255" key="1">
    <source>
        <dbReference type="PROSITE-ProRule" id="PRU01182"/>
    </source>
</evidence>
<evidence type="ECO:0000305" key="2"/>